<feature type="chain" id="PRO_1000192804" description="Phosphoglycerate kinase">
    <location>
        <begin position="1"/>
        <end position="393"/>
    </location>
</feature>
<feature type="binding site" evidence="1">
    <location>
        <begin position="22"/>
        <end position="24"/>
    </location>
    <ligand>
        <name>substrate</name>
    </ligand>
</feature>
<feature type="binding site" evidence="1">
    <location>
        <position position="37"/>
    </location>
    <ligand>
        <name>substrate</name>
    </ligand>
</feature>
<feature type="binding site" evidence="1">
    <location>
        <begin position="60"/>
        <end position="63"/>
    </location>
    <ligand>
        <name>substrate</name>
    </ligand>
</feature>
<feature type="binding site" evidence="1">
    <location>
        <position position="119"/>
    </location>
    <ligand>
        <name>substrate</name>
    </ligand>
</feature>
<feature type="binding site" evidence="1">
    <location>
        <position position="152"/>
    </location>
    <ligand>
        <name>substrate</name>
    </ligand>
</feature>
<feature type="binding site" evidence="1">
    <location>
        <position position="202"/>
    </location>
    <ligand>
        <name>ATP</name>
        <dbReference type="ChEBI" id="CHEBI:30616"/>
    </ligand>
</feature>
<feature type="binding site" evidence="1">
    <location>
        <position position="293"/>
    </location>
    <ligand>
        <name>ATP</name>
        <dbReference type="ChEBI" id="CHEBI:30616"/>
    </ligand>
</feature>
<feature type="binding site" evidence="1">
    <location>
        <position position="324"/>
    </location>
    <ligand>
        <name>ATP</name>
        <dbReference type="ChEBI" id="CHEBI:30616"/>
    </ligand>
</feature>
<feature type="binding site" evidence="1">
    <location>
        <begin position="350"/>
        <end position="353"/>
    </location>
    <ligand>
        <name>ATP</name>
        <dbReference type="ChEBI" id="CHEBI:30616"/>
    </ligand>
</feature>
<proteinExistence type="inferred from homology"/>
<reference key="1">
    <citation type="journal article" date="2011" name="J. Bacteriol.">
        <title>Whole-genome sequences of thirteen isolates of Borrelia burgdorferi.</title>
        <authorList>
            <person name="Schutzer S.E."/>
            <person name="Fraser-Liggett C.M."/>
            <person name="Casjens S.R."/>
            <person name="Qiu W.G."/>
            <person name="Dunn J.J."/>
            <person name="Mongodin E.F."/>
            <person name="Luft B.J."/>
        </authorList>
    </citation>
    <scope>NUCLEOTIDE SEQUENCE [LARGE SCALE GENOMIC DNA]</scope>
    <source>
        <strain>ZS7</strain>
    </source>
</reference>
<gene>
    <name evidence="1" type="primary">pgk</name>
    <name type="ordered locus">BbuZS7_0057</name>
</gene>
<evidence type="ECO:0000255" key="1">
    <source>
        <dbReference type="HAMAP-Rule" id="MF_00145"/>
    </source>
</evidence>
<name>PGK_BORBZ</name>
<protein>
    <recommendedName>
        <fullName evidence="1">Phosphoglycerate kinase</fullName>
        <ecNumber evidence="1">2.7.2.3</ecNumber>
    </recommendedName>
</protein>
<keyword id="KW-0067">ATP-binding</keyword>
<keyword id="KW-0963">Cytoplasm</keyword>
<keyword id="KW-0324">Glycolysis</keyword>
<keyword id="KW-0418">Kinase</keyword>
<keyword id="KW-0547">Nucleotide-binding</keyword>
<keyword id="KW-0808">Transferase</keyword>
<organism>
    <name type="scientific">Borreliella burgdorferi (strain ZS7)</name>
    <name type="common">Borrelia burgdorferi</name>
    <dbReference type="NCBI Taxonomy" id="445985"/>
    <lineage>
        <taxon>Bacteria</taxon>
        <taxon>Pseudomonadati</taxon>
        <taxon>Spirochaetota</taxon>
        <taxon>Spirochaetia</taxon>
        <taxon>Spirochaetales</taxon>
        <taxon>Borreliaceae</taxon>
        <taxon>Borreliella</taxon>
    </lineage>
</organism>
<comment type="catalytic activity">
    <reaction evidence="1">
        <text>(2R)-3-phosphoglycerate + ATP = (2R)-3-phospho-glyceroyl phosphate + ADP</text>
        <dbReference type="Rhea" id="RHEA:14801"/>
        <dbReference type="ChEBI" id="CHEBI:30616"/>
        <dbReference type="ChEBI" id="CHEBI:57604"/>
        <dbReference type="ChEBI" id="CHEBI:58272"/>
        <dbReference type="ChEBI" id="CHEBI:456216"/>
        <dbReference type="EC" id="2.7.2.3"/>
    </reaction>
</comment>
<comment type="pathway">
    <text evidence="1">Carbohydrate degradation; glycolysis; pyruvate from D-glyceraldehyde 3-phosphate: step 2/5.</text>
</comment>
<comment type="subunit">
    <text evidence="1">Monomer.</text>
</comment>
<comment type="subcellular location">
    <subcellularLocation>
        <location evidence="1">Cytoplasm</location>
    </subcellularLocation>
</comment>
<comment type="similarity">
    <text evidence="1">Belongs to the phosphoglycerate kinase family.</text>
</comment>
<accession>B7J0Z2</accession>
<sequence length="393" mass="42349">MSIKTVKDFSSFAGKRALVRCDFNVPLKEGSISDDTRIRAALSTIEYLKERGARIVLVSHLGRPDGKKNSKYSLKPVANRLSELLGQDVKMLSDCIGSEVVNSTLQMKDGDVVLLENVRFYAEEEKNDKNFAKKLSENGDVFVNDAFGAAHRAHASTVGVADYLPSVGGFLMEKEDKFLGGILKNPERPFVSIIGGSKVSSKIAVLESLLSKSNVVVIGGGMAYTFLHSEGYSIGKSLLEDEYIGIASSFLKKAKELGVKVILPLDHIVADDFNKNSIPEYINSFNIPENKIGMDIGANTLKEIEKVVKTAKTIIWNGPLGVFEFDSFSKGTAKVAEMVASCSGLTVVGGGDSVAAVNKFNLSDKITHVSTGGGASLEYLEGRILPGIKVLEN</sequence>
<dbReference type="EC" id="2.7.2.3" evidence="1"/>
<dbReference type="EMBL" id="CP001205">
    <property type="protein sequence ID" value="ACK75144.1"/>
    <property type="molecule type" value="Genomic_DNA"/>
</dbReference>
<dbReference type="RefSeq" id="WP_002658313.1">
    <property type="nucleotide sequence ID" value="NC_011728.1"/>
</dbReference>
<dbReference type="SMR" id="B7J0Z2"/>
<dbReference type="KEGG" id="bbz:BbuZS7_0057"/>
<dbReference type="HOGENOM" id="CLU_025427_0_2_12"/>
<dbReference type="UniPathway" id="UPA00109">
    <property type="reaction ID" value="UER00185"/>
</dbReference>
<dbReference type="Proteomes" id="UP000006901">
    <property type="component" value="Chromosome"/>
</dbReference>
<dbReference type="GO" id="GO:0005829">
    <property type="term" value="C:cytosol"/>
    <property type="evidence" value="ECO:0007669"/>
    <property type="project" value="TreeGrafter"/>
</dbReference>
<dbReference type="GO" id="GO:0043531">
    <property type="term" value="F:ADP binding"/>
    <property type="evidence" value="ECO:0007669"/>
    <property type="project" value="TreeGrafter"/>
</dbReference>
<dbReference type="GO" id="GO:0005524">
    <property type="term" value="F:ATP binding"/>
    <property type="evidence" value="ECO:0007669"/>
    <property type="project" value="UniProtKB-KW"/>
</dbReference>
<dbReference type="GO" id="GO:0004618">
    <property type="term" value="F:phosphoglycerate kinase activity"/>
    <property type="evidence" value="ECO:0007669"/>
    <property type="project" value="UniProtKB-UniRule"/>
</dbReference>
<dbReference type="GO" id="GO:0006094">
    <property type="term" value="P:gluconeogenesis"/>
    <property type="evidence" value="ECO:0007669"/>
    <property type="project" value="TreeGrafter"/>
</dbReference>
<dbReference type="GO" id="GO:0006096">
    <property type="term" value="P:glycolytic process"/>
    <property type="evidence" value="ECO:0007669"/>
    <property type="project" value="UniProtKB-UniRule"/>
</dbReference>
<dbReference type="CDD" id="cd00318">
    <property type="entry name" value="Phosphoglycerate_kinase"/>
    <property type="match status" value="1"/>
</dbReference>
<dbReference type="FunFam" id="3.40.50.1260:FF:000003">
    <property type="entry name" value="Phosphoglycerate kinase"/>
    <property type="match status" value="1"/>
</dbReference>
<dbReference type="FunFam" id="3.40.50.1260:FF:000006">
    <property type="entry name" value="Phosphoglycerate kinase"/>
    <property type="match status" value="1"/>
</dbReference>
<dbReference type="Gene3D" id="3.40.50.1260">
    <property type="entry name" value="Phosphoglycerate kinase, N-terminal domain"/>
    <property type="match status" value="2"/>
</dbReference>
<dbReference type="HAMAP" id="MF_00145">
    <property type="entry name" value="Phosphoglyc_kinase"/>
    <property type="match status" value="1"/>
</dbReference>
<dbReference type="InterPro" id="IPR001576">
    <property type="entry name" value="Phosphoglycerate_kinase"/>
</dbReference>
<dbReference type="InterPro" id="IPR015824">
    <property type="entry name" value="Phosphoglycerate_kinase_N"/>
</dbReference>
<dbReference type="InterPro" id="IPR036043">
    <property type="entry name" value="Phosphoglycerate_kinase_sf"/>
</dbReference>
<dbReference type="PANTHER" id="PTHR11406">
    <property type="entry name" value="PHOSPHOGLYCERATE KINASE"/>
    <property type="match status" value="1"/>
</dbReference>
<dbReference type="PANTHER" id="PTHR11406:SF23">
    <property type="entry name" value="PHOSPHOGLYCERATE KINASE 1, CHLOROPLASTIC-RELATED"/>
    <property type="match status" value="1"/>
</dbReference>
<dbReference type="Pfam" id="PF00162">
    <property type="entry name" value="PGK"/>
    <property type="match status" value="1"/>
</dbReference>
<dbReference type="PIRSF" id="PIRSF000724">
    <property type="entry name" value="Pgk"/>
    <property type="match status" value="1"/>
</dbReference>
<dbReference type="PRINTS" id="PR00477">
    <property type="entry name" value="PHGLYCKINASE"/>
</dbReference>
<dbReference type="SUPFAM" id="SSF53748">
    <property type="entry name" value="Phosphoglycerate kinase"/>
    <property type="match status" value="1"/>
</dbReference>